<name>MED18_MOUSE</name>
<organism>
    <name type="scientific">Mus musculus</name>
    <name type="common">Mouse</name>
    <dbReference type="NCBI Taxonomy" id="10090"/>
    <lineage>
        <taxon>Eukaryota</taxon>
        <taxon>Metazoa</taxon>
        <taxon>Chordata</taxon>
        <taxon>Craniata</taxon>
        <taxon>Vertebrata</taxon>
        <taxon>Euteleostomi</taxon>
        <taxon>Mammalia</taxon>
        <taxon>Eutheria</taxon>
        <taxon>Euarchontoglires</taxon>
        <taxon>Glires</taxon>
        <taxon>Rodentia</taxon>
        <taxon>Myomorpha</taxon>
        <taxon>Muroidea</taxon>
        <taxon>Muridae</taxon>
        <taxon>Murinae</taxon>
        <taxon>Mus</taxon>
        <taxon>Mus</taxon>
    </lineage>
</organism>
<proteinExistence type="evidence at protein level"/>
<accession>Q9CZ82</accession>
<evidence type="ECO:0000250" key="1"/>
<evidence type="ECO:0000250" key="2">
    <source>
        <dbReference type="UniProtKB" id="Q9BUE0"/>
    </source>
</evidence>
<evidence type="ECO:0000305" key="3"/>
<sequence>MEAPPVTMMPVTGGTINMMEYLLQGSVLDHSLESLIHRLRGLCDNMEPETFLDHEMVFLLKGQQASPFVLRARRSMDRAGAPWHLRYLGQPEMGDKNRHALVRNCVDIATSENLTDFLMEMGFRMDHEFVAKGHLFRKGIMKVVVYKIFRILVPGNTDSTEALSLSYLVELSVVAPAGQDMVSDDMRNFAEQLKPLVHLEKIDPKRLM</sequence>
<feature type="chain" id="PRO_0000304743" description="Mediator of RNA polymerase II transcription subunit 18">
    <location>
        <begin position="1"/>
        <end position="208"/>
    </location>
</feature>
<feature type="modified residue" description="Phosphoserine" evidence="2">
    <location>
        <position position="66"/>
    </location>
</feature>
<dbReference type="EMBL" id="AK012886">
    <property type="protein sequence ID" value="BAB28536.1"/>
    <property type="molecule type" value="mRNA"/>
</dbReference>
<dbReference type="EMBL" id="AK159696">
    <property type="protein sequence ID" value="BAE35296.1"/>
    <property type="molecule type" value="mRNA"/>
</dbReference>
<dbReference type="EMBL" id="AL805897">
    <property type="status" value="NOT_ANNOTATED_CDS"/>
    <property type="molecule type" value="Genomic_DNA"/>
</dbReference>
<dbReference type="EMBL" id="BC068306">
    <property type="protein sequence ID" value="AAH68306.1"/>
    <property type="molecule type" value="mRNA"/>
</dbReference>
<dbReference type="CCDS" id="CCDS18725.1"/>
<dbReference type="RefSeq" id="NP_080315.1">
    <property type="nucleotide sequence ID" value="NM_026039.3"/>
</dbReference>
<dbReference type="PDB" id="6W1S">
    <property type="method" value="EM"/>
    <property type="resolution" value="4.02 A"/>
    <property type="chains" value="M=17-203"/>
</dbReference>
<dbReference type="PDB" id="8T1I">
    <property type="method" value="EM"/>
    <property type="resolution" value="4.68 A"/>
    <property type="chains" value="M=1-208"/>
</dbReference>
<dbReference type="PDB" id="8T1L">
    <property type="method" value="EM"/>
    <property type="resolution" value="4.83 A"/>
    <property type="chains" value="M=1-208"/>
</dbReference>
<dbReference type="PDBsum" id="6W1S"/>
<dbReference type="PDBsum" id="8T1I"/>
<dbReference type="PDBsum" id="8T1L"/>
<dbReference type="EMDB" id="EMD-21514"/>
<dbReference type="EMDB" id="EMD-40968"/>
<dbReference type="EMDB" id="EMD-40971"/>
<dbReference type="SMR" id="Q9CZ82"/>
<dbReference type="BioGRID" id="212025">
    <property type="interactions" value="2"/>
</dbReference>
<dbReference type="ComplexPortal" id="CPX-3264">
    <property type="entry name" value="Core mediator complex"/>
</dbReference>
<dbReference type="FunCoup" id="Q9CZ82">
    <property type="interactions" value="2416"/>
</dbReference>
<dbReference type="IntAct" id="Q9CZ82">
    <property type="interactions" value="3"/>
</dbReference>
<dbReference type="MINT" id="Q9CZ82"/>
<dbReference type="STRING" id="10090.ENSMUSP00000099627"/>
<dbReference type="iPTMnet" id="Q9CZ82"/>
<dbReference type="PhosphoSitePlus" id="Q9CZ82"/>
<dbReference type="PaxDb" id="10090-ENSMUSP00000099627"/>
<dbReference type="PeptideAtlas" id="Q9CZ82"/>
<dbReference type="ProteomicsDB" id="292183"/>
<dbReference type="Pumba" id="Q9CZ82"/>
<dbReference type="Antibodypedia" id="30928">
    <property type="antibodies" value="223 antibodies from 25 providers"/>
</dbReference>
<dbReference type="Ensembl" id="ENSMUST00000102567.4">
    <property type="protein sequence ID" value="ENSMUSP00000099627.4"/>
    <property type="gene ID" value="ENSMUSG00000066042.5"/>
</dbReference>
<dbReference type="GeneID" id="67219"/>
<dbReference type="KEGG" id="mmu:67219"/>
<dbReference type="UCSC" id="uc008vbi.2">
    <property type="organism name" value="mouse"/>
</dbReference>
<dbReference type="AGR" id="MGI:1914469"/>
<dbReference type="CTD" id="54797"/>
<dbReference type="MGI" id="MGI:1914469">
    <property type="gene designation" value="Med18"/>
</dbReference>
<dbReference type="VEuPathDB" id="HostDB:ENSMUSG00000066042"/>
<dbReference type="eggNOG" id="KOG3264">
    <property type="taxonomic scope" value="Eukaryota"/>
</dbReference>
<dbReference type="GeneTree" id="ENSGT00390000003312"/>
<dbReference type="HOGENOM" id="CLU_084570_0_0_1"/>
<dbReference type="InParanoid" id="Q9CZ82"/>
<dbReference type="OMA" id="ARGYMFR"/>
<dbReference type="OrthoDB" id="10018982at2759"/>
<dbReference type="PhylomeDB" id="Q9CZ82"/>
<dbReference type="TreeFam" id="TF313246"/>
<dbReference type="BioGRID-ORCS" id="67219">
    <property type="hits" value="25 hits in 80 CRISPR screens"/>
</dbReference>
<dbReference type="ChiTaRS" id="Med18">
    <property type="organism name" value="mouse"/>
</dbReference>
<dbReference type="PRO" id="PR:Q9CZ82"/>
<dbReference type="Proteomes" id="UP000000589">
    <property type="component" value="Chromosome 4"/>
</dbReference>
<dbReference type="RNAct" id="Q9CZ82">
    <property type="molecule type" value="protein"/>
</dbReference>
<dbReference type="Bgee" id="ENSMUSG00000066042">
    <property type="expression patterns" value="Expressed in CA1 field of hippocampus and 212 other cell types or tissues"/>
</dbReference>
<dbReference type="ExpressionAtlas" id="Q9CZ82">
    <property type="expression patterns" value="baseline and differential"/>
</dbReference>
<dbReference type="GO" id="GO:0070847">
    <property type="term" value="C:core mediator complex"/>
    <property type="evidence" value="ECO:0000266"/>
    <property type="project" value="ComplexPortal"/>
</dbReference>
<dbReference type="GO" id="GO:0016592">
    <property type="term" value="C:mediator complex"/>
    <property type="evidence" value="ECO:0000314"/>
    <property type="project" value="MGI"/>
</dbReference>
<dbReference type="GO" id="GO:0005654">
    <property type="term" value="C:nucleoplasm"/>
    <property type="evidence" value="ECO:0000304"/>
    <property type="project" value="Reactome"/>
</dbReference>
<dbReference type="GO" id="GO:0005634">
    <property type="term" value="C:nucleus"/>
    <property type="evidence" value="ECO:0000266"/>
    <property type="project" value="ComplexPortal"/>
</dbReference>
<dbReference type="GO" id="GO:0003712">
    <property type="term" value="F:transcription coregulator activity"/>
    <property type="evidence" value="ECO:0007669"/>
    <property type="project" value="InterPro"/>
</dbReference>
<dbReference type="GO" id="GO:0032968">
    <property type="term" value="P:positive regulation of transcription elongation by RNA polymerase II"/>
    <property type="evidence" value="ECO:0000303"/>
    <property type="project" value="ComplexPortal"/>
</dbReference>
<dbReference type="GO" id="GO:0060261">
    <property type="term" value="P:positive regulation of transcription initiation by RNA polymerase II"/>
    <property type="evidence" value="ECO:0000303"/>
    <property type="project" value="ComplexPortal"/>
</dbReference>
<dbReference type="GO" id="GO:0051123">
    <property type="term" value="P:RNA polymerase II preinitiation complex assembly"/>
    <property type="evidence" value="ECO:0000303"/>
    <property type="project" value="ComplexPortal"/>
</dbReference>
<dbReference type="FunFam" id="2.40.320.10:FF:000001">
    <property type="entry name" value="Mediator of RNA polymerase II transcription subunit 18"/>
    <property type="match status" value="1"/>
</dbReference>
<dbReference type="Gene3D" id="2.40.320.10">
    <property type="entry name" value="Hypothetical Protein Pfu-838710-001"/>
    <property type="match status" value="1"/>
</dbReference>
<dbReference type="InterPro" id="IPR019095">
    <property type="entry name" value="Mediator_Med18"/>
</dbReference>
<dbReference type="PANTHER" id="PTHR13321:SF2">
    <property type="entry name" value="MEDIATOR OF RNA POLYMERASE II TRANSCRIPTION SUBUNIT 18"/>
    <property type="match status" value="1"/>
</dbReference>
<dbReference type="PANTHER" id="PTHR13321">
    <property type="entry name" value="MEDIATOR OF RNA POLYMERASE II TRANSCRIPTION, SUBUNIT 18"/>
    <property type="match status" value="1"/>
</dbReference>
<dbReference type="Pfam" id="PF09637">
    <property type="entry name" value="Med18"/>
    <property type="match status" value="1"/>
</dbReference>
<reference key="1">
    <citation type="journal article" date="2005" name="Science">
        <title>The transcriptional landscape of the mammalian genome.</title>
        <authorList>
            <person name="Carninci P."/>
            <person name="Kasukawa T."/>
            <person name="Katayama S."/>
            <person name="Gough J."/>
            <person name="Frith M.C."/>
            <person name="Maeda N."/>
            <person name="Oyama R."/>
            <person name="Ravasi T."/>
            <person name="Lenhard B."/>
            <person name="Wells C."/>
            <person name="Kodzius R."/>
            <person name="Shimokawa K."/>
            <person name="Bajic V.B."/>
            <person name="Brenner S.E."/>
            <person name="Batalov S."/>
            <person name="Forrest A.R."/>
            <person name="Zavolan M."/>
            <person name="Davis M.J."/>
            <person name="Wilming L.G."/>
            <person name="Aidinis V."/>
            <person name="Allen J.E."/>
            <person name="Ambesi-Impiombato A."/>
            <person name="Apweiler R."/>
            <person name="Aturaliya R.N."/>
            <person name="Bailey T.L."/>
            <person name="Bansal M."/>
            <person name="Baxter L."/>
            <person name="Beisel K.W."/>
            <person name="Bersano T."/>
            <person name="Bono H."/>
            <person name="Chalk A.M."/>
            <person name="Chiu K.P."/>
            <person name="Choudhary V."/>
            <person name="Christoffels A."/>
            <person name="Clutterbuck D.R."/>
            <person name="Crowe M.L."/>
            <person name="Dalla E."/>
            <person name="Dalrymple B.P."/>
            <person name="de Bono B."/>
            <person name="Della Gatta G."/>
            <person name="di Bernardo D."/>
            <person name="Down T."/>
            <person name="Engstrom P."/>
            <person name="Fagiolini M."/>
            <person name="Faulkner G."/>
            <person name="Fletcher C.F."/>
            <person name="Fukushima T."/>
            <person name="Furuno M."/>
            <person name="Futaki S."/>
            <person name="Gariboldi M."/>
            <person name="Georgii-Hemming P."/>
            <person name="Gingeras T.R."/>
            <person name="Gojobori T."/>
            <person name="Green R.E."/>
            <person name="Gustincich S."/>
            <person name="Harbers M."/>
            <person name="Hayashi Y."/>
            <person name="Hensch T.K."/>
            <person name="Hirokawa N."/>
            <person name="Hill D."/>
            <person name="Huminiecki L."/>
            <person name="Iacono M."/>
            <person name="Ikeo K."/>
            <person name="Iwama A."/>
            <person name="Ishikawa T."/>
            <person name="Jakt M."/>
            <person name="Kanapin A."/>
            <person name="Katoh M."/>
            <person name="Kawasawa Y."/>
            <person name="Kelso J."/>
            <person name="Kitamura H."/>
            <person name="Kitano H."/>
            <person name="Kollias G."/>
            <person name="Krishnan S.P."/>
            <person name="Kruger A."/>
            <person name="Kummerfeld S.K."/>
            <person name="Kurochkin I.V."/>
            <person name="Lareau L.F."/>
            <person name="Lazarevic D."/>
            <person name="Lipovich L."/>
            <person name="Liu J."/>
            <person name="Liuni S."/>
            <person name="McWilliam S."/>
            <person name="Madan Babu M."/>
            <person name="Madera M."/>
            <person name="Marchionni L."/>
            <person name="Matsuda H."/>
            <person name="Matsuzawa S."/>
            <person name="Miki H."/>
            <person name="Mignone F."/>
            <person name="Miyake S."/>
            <person name="Morris K."/>
            <person name="Mottagui-Tabar S."/>
            <person name="Mulder N."/>
            <person name="Nakano N."/>
            <person name="Nakauchi H."/>
            <person name="Ng P."/>
            <person name="Nilsson R."/>
            <person name="Nishiguchi S."/>
            <person name="Nishikawa S."/>
            <person name="Nori F."/>
            <person name="Ohara O."/>
            <person name="Okazaki Y."/>
            <person name="Orlando V."/>
            <person name="Pang K.C."/>
            <person name="Pavan W.J."/>
            <person name="Pavesi G."/>
            <person name="Pesole G."/>
            <person name="Petrovsky N."/>
            <person name="Piazza S."/>
            <person name="Reed J."/>
            <person name="Reid J.F."/>
            <person name="Ring B.Z."/>
            <person name="Ringwald M."/>
            <person name="Rost B."/>
            <person name="Ruan Y."/>
            <person name="Salzberg S.L."/>
            <person name="Sandelin A."/>
            <person name="Schneider C."/>
            <person name="Schoenbach C."/>
            <person name="Sekiguchi K."/>
            <person name="Semple C.A."/>
            <person name="Seno S."/>
            <person name="Sessa L."/>
            <person name="Sheng Y."/>
            <person name="Shibata Y."/>
            <person name="Shimada H."/>
            <person name="Shimada K."/>
            <person name="Silva D."/>
            <person name="Sinclair B."/>
            <person name="Sperling S."/>
            <person name="Stupka E."/>
            <person name="Sugiura K."/>
            <person name="Sultana R."/>
            <person name="Takenaka Y."/>
            <person name="Taki K."/>
            <person name="Tammoja K."/>
            <person name="Tan S.L."/>
            <person name="Tang S."/>
            <person name="Taylor M.S."/>
            <person name="Tegner J."/>
            <person name="Teichmann S.A."/>
            <person name="Ueda H.R."/>
            <person name="van Nimwegen E."/>
            <person name="Verardo R."/>
            <person name="Wei C.L."/>
            <person name="Yagi K."/>
            <person name="Yamanishi H."/>
            <person name="Zabarovsky E."/>
            <person name="Zhu S."/>
            <person name="Zimmer A."/>
            <person name="Hide W."/>
            <person name="Bult C."/>
            <person name="Grimmond S.M."/>
            <person name="Teasdale R.D."/>
            <person name="Liu E.T."/>
            <person name="Brusic V."/>
            <person name="Quackenbush J."/>
            <person name="Wahlestedt C."/>
            <person name="Mattick J.S."/>
            <person name="Hume D.A."/>
            <person name="Kai C."/>
            <person name="Sasaki D."/>
            <person name="Tomaru Y."/>
            <person name="Fukuda S."/>
            <person name="Kanamori-Katayama M."/>
            <person name="Suzuki M."/>
            <person name="Aoki J."/>
            <person name="Arakawa T."/>
            <person name="Iida J."/>
            <person name="Imamura K."/>
            <person name="Itoh M."/>
            <person name="Kato T."/>
            <person name="Kawaji H."/>
            <person name="Kawagashira N."/>
            <person name="Kawashima T."/>
            <person name="Kojima M."/>
            <person name="Kondo S."/>
            <person name="Konno H."/>
            <person name="Nakano K."/>
            <person name="Ninomiya N."/>
            <person name="Nishio T."/>
            <person name="Okada M."/>
            <person name="Plessy C."/>
            <person name="Shibata K."/>
            <person name="Shiraki T."/>
            <person name="Suzuki S."/>
            <person name="Tagami M."/>
            <person name="Waki K."/>
            <person name="Watahiki A."/>
            <person name="Okamura-Oho Y."/>
            <person name="Suzuki H."/>
            <person name="Kawai J."/>
            <person name="Hayashizaki Y."/>
        </authorList>
    </citation>
    <scope>NUCLEOTIDE SEQUENCE [LARGE SCALE MRNA]</scope>
    <source>
        <strain>C57BL/6J</strain>
        <tissue>Embryo</tissue>
        <tissue>Osteoclast</tissue>
    </source>
</reference>
<reference key="2">
    <citation type="journal article" date="2009" name="PLoS Biol.">
        <title>Lineage-specific biology revealed by a finished genome assembly of the mouse.</title>
        <authorList>
            <person name="Church D.M."/>
            <person name="Goodstadt L."/>
            <person name="Hillier L.W."/>
            <person name="Zody M.C."/>
            <person name="Goldstein S."/>
            <person name="She X."/>
            <person name="Bult C.J."/>
            <person name="Agarwala R."/>
            <person name="Cherry J.L."/>
            <person name="DiCuccio M."/>
            <person name="Hlavina W."/>
            <person name="Kapustin Y."/>
            <person name="Meric P."/>
            <person name="Maglott D."/>
            <person name="Birtle Z."/>
            <person name="Marques A.C."/>
            <person name="Graves T."/>
            <person name="Zhou S."/>
            <person name="Teague B."/>
            <person name="Potamousis K."/>
            <person name="Churas C."/>
            <person name="Place M."/>
            <person name="Herschleb J."/>
            <person name="Runnheim R."/>
            <person name="Forrest D."/>
            <person name="Amos-Landgraf J."/>
            <person name="Schwartz D.C."/>
            <person name="Cheng Z."/>
            <person name="Lindblad-Toh K."/>
            <person name="Eichler E.E."/>
            <person name="Ponting C.P."/>
        </authorList>
    </citation>
    <scope>NUCLEOTIDE SEQUENCE [LARGE SCALE GENOMIC DNA]</scope>
    <source>
        <strain>C57BL/6J</strain>
    </source>
</reference>
<reference key="3">
    <citation type="journal article" date="2004" name="Genome Res.">
        <title>The status, quality, and expansion of the NIH full-length cDNA project: the Mammalian Gene Collection (MGC).</title>
        <authorList>
            <consortium name="The MGC Project Team"/>
        </authorList>
    </citation>
    <scope>NUCLEOTIDE SEQUENCE [LARGE SCALE MRNA]</scope>
    <source>
        <strain>C57BL/6NCr</strain>
        <tissue>Hematopoietic stem cell</tissue>
    </source>
</reference>
<reference key="4">
    <citation type="journal article" date="2010" name="Cell">
        <title>A tissue-specific atlas of mouse protein phosphorylation and expression.</title>
        <authorList>
            <person name="Huttlin E.L."/>
            <person name="Jedrychowski M.P."/>
            <person name="Elias J.E."/>
            <person name="Goswami T."/>
            <person name="Rad R."/>
            <person name="Beausoleil S.A."/>
            <person name="Villen J."/>
            <person name="Haas W."/>
            <person name="Sowa M.E."/>
            <person name="Gygi S.P."/>
        </authorList>
    </citation>
    <scope>IDENTIFICATION BY MASS SPECTROMETRY [LARGE SCALE ANALYSIS]</scope>
    <source>
        <tissue>Spleen</tissue>
    </source>
</reference>
<protein>
    <recommendedName>
        <fullName>Mediator of RNA polymerase II transcription subunit 18</fullName>
    </recommendedName>
    <alternativeName>
        <fullName>Mediator complex subunit 18</fullName>
    </alternativeName>
</protein>
<gene>
    <name type="primary">Med18</name>
</gene>
<keyword id="KW-0002">3D-structure</keyword>
<keyword id="KW-0010">Activator</keyword>
<keyword id="KW-0539">Nucleus</keyword>
<keyword id="KW-0597">Phosphoprotein</keyword>
<keyword id="KW-1185">Reference proteome</keyword>
<keyword id="KW-0804">Transcription</keyword>
<keyword id="KW-0805">Transcription regulation</keyword>
<comment type="function">
    <text evidence="1">Component of the Mediator complex, a coactivator involved in the regulated transcription of nearly all RNA polymerase II-dependent genes. Mediator functions as a bridge to convey information from gene-specific regulatory proteins to the basal RNA polymerase II transcription machinery. Mediator is recruited to promoters by direct interactions with regulatory proteins and serves as a scaffold for the assembly of a functional preinitiation complex with RNA polymerase II and the general transcription factors (By similarity).</text>
</comment>
<comment type="subunit">
    <text evidence="1">Component of the Mediator complex, which is composed of MED1, MED4, MED6, MED7, MED8, MED9, MED10, MED11, MED12, MED13, MED13L, MED14, MED15, MED16, MED17, MED18, MED19, MED20, MED21, MED22, MED23, MED24, MED25, MED26, MED27, MED29, MED30, MED31, CCNC, CDK8 and CDC2L6/CDK11. The MED12, MED13, CCNC and CDK8 subunits form a distinct module termed the CDK8 module. Mediator containing the CDK8 module is less active than Mediator lacking this module in supporting transcriptional activation. Individual preparations of the Mediator complex lacking one or more distinct subunits have been variously termed ARC, CRSP, DRIP, PC2, SMCC and TRAP (By similarity).</text>
</comment>
<comment type="subcellular location">
    <subcellularLocation>
        <location evidence="3">Nucleus</location>
    </subcellularLocation>
</comment>
<comment type="similarity">
    <text evidence="3">Belongs to the Mediator complex subunit 18 family.</text>
</comment>